<proteinExistence type="inferred from homology"/>
<reference key="1">
    <citation type="submission" date="2006-01" db="EMBL/GenBank/DDBJ databases">
        <title>Complete sequence of Rhodopseudomonas palustris HaA2.</title>
        <authorList>
            <consortium name="US DOE Joint Genome Institute"/>
            <person name="Copeland A."/>
            <person name="Lucas S."/>
            <person name="Lapidus A."/>
            <person name="Barry K."/>
            <person name="Detter J.C."/>
            <person name="Glavina T."/>
            <person name="Hammon N."/>
            <person name="Israni S."/>
            <person name="Pitluck S."/>
            <person name="Chain P."/>
            <person name="Malfatti S."/>
            <person name="Shin M."/>
            <person name="Vergez L."/>
            <person name="Schmutz J."/>
            <person name="Larimer F."/>
            <person name="Land M."/>
            <person name="Hauser L."/>
            <person name="Pelletier D.A."/>
            <person name="Kyrpides N."/>
            <person name="Anderson I."/>
            <person name="Oda Y."/>
            <person name="Harwood C.S."/>
            <person name="Richardson P."/>
        </authorList>
    </citation>
    <scope>NUCLEOTIDE SEQUENCE [LARGE SCALE GENOMIC DNA]</scope>
    <source>
        <strain>HaA2</strain>
    </source>
</reference>
<comment type="function">
    <text evidence="1">May play a role in DNA repair. It seems to be involved in an RecBC-independent recombinational process of DNA repair. It may act with RecF and RecO.</text>
</comment>
<comment type="similarity">
    <text evidence="1">Belongs to the RecR family.</text>
</comment>
<evidence type="ECO:0000255" key="1">
    <source>
        <dbReference type="HAMAP-Rule" id="MF_00017"/>
    </source>
</evidence>
<gene>
    <name evidence="1" type="primary">recR</name>
    <name type="ordered locus">RPB_0666</name>
</gene>
<accession>Q2J2D3</accession>
<dbReference type="EMBL" id="CP000250">
    <property type="protein sequence ID" value="ABD05377.1"/>
    <property type="molecule type" value="Genomic_DNA"/>
</dbReference>
<dbReference type="RefSeq" id="WP_011439567.1">
    <property type="nucleotide sequence ID" value="NC_007778.1"/>
</dbReference>
<dbReference type="SMR" id="Q2J2D3"/>
<dbReference type="STRING" id="316058.RPB_0666"/>
<dbReference type="KEGG" id="rpb:RPB_0666"/>
<dbReference type="eggNOG" id="COG0353">
    <property type="taxonomic scope" value="Bacteria"/>
</dbReference>
<dbReference type="HOGENOM" id="CLU_060739_1_1_5"/>
<dbReference type="OrthoDB" id="9802672at2"/>
<dbReference type="Proteomes" id="UP000008809">
    <property type="component" value="Chromosome"/>
</dbReference>
<dbReference type="GO" id="GO:0003677">
    <property type="term" value="F:DNA binding"/>
    <property type="evidence" value="ECO:0007669"/>
    <property type="project" value="UniProtKB-UniRule"/>
</dbReference>
<dbReference type="GO" id="GO:0008270">
    <property type="term" value="F:zinc ion binding"/>
    <property type="evidence" value="ECO:0007669"/>
    <property type="project" value="UniProtKB-KW"/>
</dbReference>
<dbReference type="GO" id="GO:0006310">
    <property type="term" value="P:DNA recombination"/>
    <property type="evidence" value="ECO:0007669"/>
    <property type="project" value="UniProtKB-UniRule"/>
</dbReference>
<dbReference type="GO" id="GO:0006281">
    <property type="term" value="P:DNA repair"/>
    <property type="evidence" value="ECO:0007669"/>
    <property type="project" value="UniProtKB-UniRule"/>
</dbReference>
<dbReference type="CDD" id="cd01025">
    <property type="entry name" value="TOPRIM_recR"/>
    <property type="match status" value="1"/>
</dbReference>
<dbReference type="Gene3D" id="3.40.1360.10">
    <property type="match status" value="1"/>
</dbReference>
<dbReference type="Gene3D" id="6.10.250.240">
    <property type="match status" value="1"/>
</dbReference>
<dbReference type="Gene3D" id="1.10.8.420">
    <property type="entry name" value="RecR Domain 1"/>
    <property type="match status" value="1"/>
</dbReference>
<dbReference type="HAMAP" id="MF_00017">
    <property type="entry name" value="RecR"/>
    <property type="match status" value="1"/>
</dbReference>
<dbReference type="InterPro" id="IPR000093">
    <property type="entry name" value="DNA_Rcmb_RecR"/>
</dbReference>
<dbReference type="InterPro" id="IPR023627">
    <property type="entry name" value="Rcmb_RecR"/>
</dbReference>
<dbReference type="InterPro" id="IPR015967">
    <property type="entry name" value="Rcmb_RecR_Znf"/>
</dbReference>
<dbReference type="InterPro" id="IPR006171">
    <property type="entry name" value="TOPRIM_dom"/>
</dbReference>
<dbReference type="InterPro" id="IPR034137">
    <property type="entry name" value="TOPRIM_RecR"/>
</dbReference>
<dbReference type="NCBIfam" id="TIGR00615">
    <property type="entry name" value="recR"/>
    <property type="match status" value="1"/>
</dbReference>
<dbReference type="PANTHER" id="PTHR30446">
    <property type="entry name" value="RECOMBINATION PROTEIN RECR"/>
    <property type="match status" value="1"/>
</dbReference>
<dbReference type="PANTHER" id="PTHR30446:SF0">
    <property type="entry name" value="RECOMBINATION PROTEIN RECR"/>
    <property type="match status" value="1"/>
</dbReference>
<dbReference type="Pfam" id="PF21175">
    <property type="entry name" value="RecR_C"/>
    <property type="match status" value="1"/>
</dbReference>
<dbReference type="Pfam" id="PF21176">
    <property type="entry name" value="RecR_HhH"/>
    <property type="match status" value="1"/>
</dbReference>
<dbReference type="Pfam" id="PF13662">
    <property type="entry name" value="Toprim_4"/>
    <property type="match status" value="1"/>
</dbReference>
<dbReference type="SMART" id="SM00493">
    <property type="entry name" value="TOPRIM"/>
    <property type="match status" value="1"/>
</dbReference>
<dbReference type="SUPFAM" id="SSF111304">
    <property type="entry name" value="Recombination protein RecR"/>
    <property type="match status" value="1"/>
</dbReference>
<dbReference type="PROSITE" id="PS01300">
    <property type="entry name" value="RECR"/>
    <property type="match status" value="1"/>
</dbReference>
<dbReference type="PROSITE" id="PS50880">
    <property type="entry name" value="TOPRIM"/>
    <property type="match status" value="1"/>
</dbReference>
<organism>
    <name type="scientific">Rhodopseudomonas palustris (strain HaA2)</name>
    <dbReference type="NCBI Taxonomy" id="316058"/>
    <lineage>
        <taxon>Bacteria</taxon>
        <taxon>Pseudomonadati</taxon>
        <taxon>Pseudomonadota</taxon>
        <taxon>Alphaproteobacteria</taxon>
        <taxon>Hyphomicrobiales</taxon>
        <taxon>Nitrobacteraceae</taxon>
        <taxon>Rhodopseudomonas</taxon>
    </lineage>
</organism>
<name>RECR_RHOP2</name>
<keyword id="KW-0227">DNA damage</keyword>
<keyword id="KW-0233">DNA recombination</keyword>
<keyword id="KW-0234">DNA repair</keyword>
<keyword id="KW-0479">Metal-binding</keyword>
<keyword id="KW-1185">Reference proteome</keyword>
<keyword id="KW-0862">Zinc</keyword>
<keyword id="KW-0863">Zinc-finger</keyword>
<sequence length="201" mass="21341">MAIAVAGPEIERLIQLLARLPGLGPRSARRAALHLIKKRDALMTPLASALQVAIDKIEVCKTCGNIDTQNPCTVCTDPRRDPSIIVVVADVADLWALERASATNGRYHVLGATLSPLDGVGPDDLTIDALVARAHDPAVGEIILALNATVDGQTTAHYVTDLLQDANVKVTRLAHGVPVGGELDYLDEGTLSAAMRQRTLF</sequence>
<protein>
    <recommendedName>
        <fullName evidence="1">Recombination protein RecR</fullName>
    </recommendedName>
</protein>
<feature type="chain" id="PRO_1000001593" description="Recombination protein RecR">
    <location>
        <begin position="1"/>
        <end position="201"/>
    </location>
</feature>
<feature type="domain" description="Toprim" evidence="1">
    <location>
        <begin position="83"/>
        <end position="178"/>
    </location>
</feature>
<feature type="zinc finger region" description="C4-type" evidence="1">
    <location>
        <begin position="60"/>
        <end position="75"/>
    </location>
</feature>